<dbReference type="EMBL" id="BX936398">
    <property type="protein sequence ID" value="CAH19626.1"/>
    <property type="molecule type" value="Genomic_DNA"/>
</dbReference>
<dbReference type="RefSeq" id="WP_011191602.1">
    <property type="nucleotide sequence ID" value="NC_006155.1"/>
</dbReference>
<dbReference type="SMR" id="Q66FF2"/>
<dbReference type="KEGG" id="ypo:BZ17_2182"/>
<dbReference type="KEGG" id="yps:YPTB0386"/>
<dbReference type="PATRIC" id="fig|273123.14.peg.2310"/>
<dbReference type="Proteomes" id="UP000001011">
    <property type="component" value="Chromosome"/>
</dbReference>
<dbReference type="GO" id="GO:0005737">
    <property type="term" value="C:cytoplasm"/>
    <property type="evidence" value="ECO:0007669"/>
    <property type="project" value="UniProtKB-SubCell"/>
</dbReference>
<dbReference type="GO" id="GO:0003700">
    <property type="term" value="F:DNA-binding transcription factor activity"/>
    <property type="evidence" value="ECO:0007669"/>
    <property type="project" value="UniProtKB-UniRule"/>
</dbReference>
<dbReference type="GO" id="GO:0043565">
    <property type="term" value="F:sequence-specific DNA binding"/>
    <property type="evidence" value="ECO:0007669"/>
    <property type="project" value="InterPro"/>
</dbReference>
<dbReference type="GO" id="GO:0045893">
    <property type="term" value="P:positive regulation of DNA-templated transcription"/>
    <property type="evidence" value="ECO:0007669"/>
    <property type="project" value="UniProtKB-UniRule"/>
</dbReference>
<dbReference type="GO" id="GO:0019299">
    <property type="term" value="P:rhamnose metabolic process"/>
    <property type="evidence" value="ECO:0007669"/>
    <property type="project" value="UniProtKB-UniRule"/>
</dbReference>
<dbReference type="CDD" id="cd06977">
    <property type="entry name" value="cupin_RhaR_RhaS-like_N"/>
    <property type="match status" value="1"/>
</dbReference>
<dbReference type="Gene3D" id="1.10.10.60">
    <property type="entry name" value="Homeodomain-like"/>
    <property type="match status" value="1"/>
</dbReference>
<dbReference type="Gene3D" id="2.60.120.10">
    <property type="entry name" value="Jelly Rolls"/>
    <property type="match status" value="1"/>
</dbReference>
<dbReference type="HAMAP" id="MF_01534">
    <property type="entry name" value="HTH_type_RhaS"/>
    <property type="match status" value="1"/>
</dbReference>
<dbReference type="InterPro" id="IPR003313">
    <property type="entry name" value="AraC-bd"/>
</dbReference>
<dbReference type="InterPro" id="IPR050204">
    <property type="entry name" value="AraC_XylS_family_regulators"/>
</dbReference>
<dbReference type="InterPro" id="IPR009057">
    <property type="entry name" value="Homeodomain-like_sf"/>
</dbReference>
<dbReference type="InterPro" id="IPR037923">
    <property type="entry name" value="HTH-like"/>
</dbReference>
<dbReference type="InterPro" id="IPR018060">
    <property type="entry name" value="HTH_AraC"/>
</dbReference>
<dbReference type="InterPro" id="IPR018062">
    <property type="entry name" value="HTH_AraC-typ_CS"/>
</dbReference>
<dbReference type="InterPro" id="IPR047220">
    <property type="entry name" value="RhaR_RhaS-like_N"/>
</dbReference>
<dbReference type="InterPro" id="IPR014710">
    <property type="entry name" value="RmlC-like_jellyroll"/>
</dbReference>
<dbReference type="InterPro" id="IPR020449">
    <property type="entry name" value="Tscrpt_reg_AraC-type_HTH"/>
</dbReference>
<dbReference type="InterPro" id="IPR023609">
    <property type="entry name" value="Tscrpt_reg_HTH_RhaS"/>
</dbReference>
<dbReference type="NCBIfam" id="NF010028">
    <property type="entry name" value="PRK13503.1"/>
    <property type="match status" value="1"/>
</dbReference>
<dbReference type="PANTHER" id="PTHR46796:SF13">
    <property type="entry name" value="HTH-TYPE TRANSCRIPTIONAL ACTIVATOR RHAS"/>
    <property type="match status" value="1"/>
</dbReference>
<dbReference type="PANTHER" id="PTHR46796">
    <property type="entry name" value="HTH-TYPE TRANSCRIPTIONAL ACTIVATOR RHAS-RELATED"/>
    <property type="match status" value="1"/>
</dbReference>
<dbReference type="Pfam" id="PF02311">
    <property type="entry name" value="AraC_binding"/>
    <property type="match status" value="1"/>
</dbReference>
<dbReference type="Pfam" id="PF12833">
    <property type="entry name" value="HTH_18"/>
    <property type="match status" value="1"/>
</dbReference>
<dbReference type="PRINTS" id="PR00032">
    <property type="entry name" value="HTHARAC"/>
</dbReference>
<dbReference type="SMART" id="SM00342">
    <property type="entry name" value="HTH_ARAC"/>
    <property type="match status" value="1"/>
</dbReference>
<dbReference type="SUPFAM" id="SSF46689">
    <property type="entry name" value="Homeodomain-like"/>
    <property type="match status" value="2"/>
</dbReference>
<dbReference type="SUPFAM" id="SSF51215">
    <property type="entry name" value="Regulatory protein AraC"/>
    <property type="match status" value="1"/>
</dbReference>
<dbReference type="PROSITE" id="PS00041">
    <property type="entry name" value="HTH_ARAC_FAMILY_1"/>
    <property type="match status" value="1"/>
</dbReference>
<dbReference type="PROSITE" id="PS01124">
    <property type="entry name" value="HTH_ARAC_FAMILY_2"/>
    <property type="match status" value="1"/>
</dbReference>
<keyword id="KW-0010">Activator</keyword>
<keyword id="KW-0963">Cytoplasm</keyword>
<keyword id="KW-0238">DNA-binding</keyword>
<keyword id="KW-0677">Repeat</keyword>
<keyword id="KW-0684">Rhamnose metabolism</keyword>
<keyword id="KW-0804">Transcription</keyword>
<keyword id="KW-0805">Transcription regulation</keyword>
<reference key="1">
    <citation type="journal article" date="2004" name="Proc. Natl. Acad. Sci. U.S.A.">
        <title>Insights into the evolution of Yersinia pestis through whole-genome comparison with Yersinia pseudotuberculosis.</title>
        <authorList>
            <person name="Chain P.S.G."/>
            <person name="Carniel E."/>
            <person name="Larimer F.W."/>
            <person name="Lamerdin J."/>
            <person name="Stoutland P.O."/>
            <person name="Regala W.M."/>
            <person name="Georgescu A.M."/>
            <person name="Vergez L.M."/>
            <person name="Land M.L."/>
            <person name="Motin V.L."/>
            <person name="Brubaker R.R."/>
            <person name="Fowler J."/>
            <person name="Hinnebusch J."/>
            <person name="Marceau M."/>
            <person name="Medigue C."/>
            <person name="Simonet M."/>
            <person name="Chenal-Francisque V."/>
            <person name="Souza B."/>
            <person name="Dacheux D."/>
            <person name="Elliott J.M."/>
            <person name="Derbise A."/>
            <person name="Hauser L.J."/>
            <person name="Garcia E."/>
        </authorList>
    </citation>
    <scope>NUCLEOTIDE SEQUENCE [LARGE SCALE GENOMIC DNA]</scope>
    <source>
        <strain>IP32953</strain>
    </source>
</reference>
<proteinExistence type="inferred from homology"/>
<evidence type="ECO:0000255" key="1">
    <source>
        <dbReference type="HAMAP-Rule" id="MF_01534"/>
    </source>
</evidence>
<protein>
    <recommendedName>
        <fullName evidence="1">HTH-type transcriptional activator RhaS</fullName>
    </recommendedName>
    <alternativeName>
        <fullName evidence="1">L-rhamnose operon regulatory protein RhaS</fullName>
    </alternativeName>
</protein>
<sequence>MTVLHSIDFFSSSSAPVAIEARAPQSAFPEHHHDFYEIVIVEEGAGVHVFNGNPYTLSRGCVCFVRDHDRHLFESTDDLFLTNVLFRAPDAFRFLSGVGHFLPRECDGVYPSHWRVNGQVLQQIKCLIACLEHAPKSDRVEDIALHESVFMQLLVKLWQGCQTQAGDDQEGRLYQLLDWLQNNYSEAVEWPELADRFALPLRTLHRQLKNKTGMTPQRYLTRLRLLQARHQLCYSDNSVTDIAYLCGFGDSNHFSTLFKREFSQSPRDLRSQL</sequence>
<accession>Q66FF2</accession>
<organism>
    <name type="scientific">Yersinia pseudotuberculosis serotype I (strain IP32953)</name>
    <dbReference type="NCBI Taxonomy" id="273123"/>
    <lineage>
        <taxon>Bacteria</taxon>
        <taxon>Pseudomonadati</taxon>
        <taxon>Pseudomonadota</taxon>
        <taxon>Gammaproteobacteria</taxon>
        <taxon>Enterobacterales</taxon>
        <taxon>Yersiniaceae</taxon>
        <taxon>Yersinia</taxon>
    </lineage>
</organism>
<gene>
    <name evidence="1" type="primary">rhaS</name>
    <name type="ordered locus">YPTB0386</name>
</gene>
<feature type="chain" id="PRO_0000194574" description="HTH-type transcriptional activator RhaS">
    <location>
        <begin position="1"/>
        <end position="273"/>
    </location>
</feature>
<feature type="domain" description="HTH araC/xylS-type" evidence="1">
    <location>
        <begin position="174"/>
        <end position="272"/>
    </location>
</feature>
<feature type="DNA-binding region" description="H-T-H motif" evidence="1">
    <location>
        <begin position="191"/>
        <end position="212"/>
    </location>
</feature>
<feature type="DNA-binding region" description="H-T-H motif" evidence="1">
    <location>
        <begin position="239"/>
        <end position="262"/>
    </location>
</feature>
<feature type="site" description="Interaction with sigma-70" evidence="1">
    <location>
        <position position="241"/>
    </location>
</feature>
<feature type="site" description="Interaction with sigma-70" evidence="1">
    <location>
        <position position="250"/>
    </location>
</feature>
<comment type="function">
    <text evidence="1">Activates expression of the rhaBAD and rhaT operons.</text>
</comment>
<comment type="subunit">
    <text evidence="1">Binds DNA as a dimer.</text>
</comment>
<comment type="subcellular location">
    <subcellularLocation>
        <location evidence="1">Cytoplasm</location>
    </subcellularLocation>
</comment>
<name>RHAS_YERPS</name>